<protein>
    <recommendedName>
        <fullName evidence="1">Threonine--tRNA ligase</fullName>
        <ecNumber evidence="1">6.1.1.3</ecNumber>
    </recommendedName>
    <alternativeName>
        <fullName evidence="1">Threonyl-tRNA synthetase</fullName>
        <shortName evidence="1">ThrRS</shortName>
    </alternativeName>
</protein>
<reference key="1">
    <citation type="journal article" date="2002" name="Genome Res.">
        <title>A complete sequence of the T. tengcongensis genome.</title>
        <authorList>
            <person name="Bao Q."/>
            <person name="Tian Y."/>
            <person name="Li W."/>
            <person name="Xu Z."/>
            <person name="Xuan Z."/>
            <person name="Hu S."/>
            <person name="Dong W."/>
            <person name="Yang J."/>
            <person name="Chen Y."/>
            <person name="Xue Y."/>
            <person name="Xu Y."/>
            <person name="Lai X."/>
            <person name="Huang L."/>
            <person name="Dong X."/>
            <person name="Ma Y."/>
            <person name="Ling L."/>
            <person name="Tan H."/>
            <person name="Chen R."/>
            <person name="Wang J."/>
            <person name="Yu J."/>
            <person name="Yang H."/>
        </authorList>
    </citation>
    <scope>NUCLEOTIDE SEQUENCE [LARGE SCALE GENOMIC DNA]</scope>
    <source>
        <strain>DSM 15242 / JCM 11007 / NBRC 100824 / MB4</strain>
    </source>
</reference>
<proteinExistence type="inferred from homology"/>
<organism>
    <name type="scientific">Caldanaerobacter subterraneus subsp. tengcongensis (strain DSM 15242 / JCM 11007 / NBRC 100824 / MB4)</name>
    <name type="common">Thermoanaerobacter tengcongensis</name>
    <dbReference type="NCBI Taxonomy" id="273068"/>
    <lineage>
        <taxon>Bacteria</taxon>
        <taxon>Bacillati</taxon>
        <taxon>Bacillota</taxon>
        <taxon>Clostridia</taxon>
        <taxon>Thermoanaerobacterales</taxon>
        <taxon>Thermoanaerobacteraceae</taxon>
        <taxon>Caldanaerobacter</taxon>
    </lineage>
</organism>
<dbReference type="EC" id="6.1.1.3" evidence="1"/>
<dbReference type="EMBL" id="AE008691">
    <property type="protein sequence ID" value="AAM24913.1"/>
    <property type="molecule type" value="Genomic_DNA"/>
</dbReference>
<dbReference type="SMR" id="Q8R9A4"/>
<dbReference type="STRING" id="273068.TTE1713"/>
<dbReference type="KEGG" id="tte:TTE1713"/>
<dbReference type="eggNOG" id="COG0441">
    <property type="taxonomic scope" value="Bacteria"/>
</dbReference>
<dbReference type="HOGENOM" id="CLU_008554_0_1_9"/>
<dbReference type="Proteomes" id="UP000000555">
    <property type="component" value="Chromosome"/>
</dbReference>
<dbReference type="GO" id="GO:0005737">
    <property type="term" value="C:cytoplasm"/>
    <property type="evidence" value="ECO:0007669"/>
    <property type="project" value="UniProtKB-SubCell"/>
</dbReference>
<dbReference type="GO" id="GO:0005524">
    <property type="term" value="F:ATP binding"/>
    <property type="evidence" value="ECO:0007669"/>
    <property type="project" value="UniProtKB-UniRule"/>
</dbReference>
<dbReference type="GO" id="GO:0140096">
    <property type="term" value="F:catalytic activity, acting on a protein"/>
    <property type="evidence" value="ECO:0007669"/>
    <property type="project" value="UniProtKB-ARBA"/>
</dbReference>
<dbReference type="GO" id="GO:0046872">
    <property type="term" value="F:metal ion binding"/>
    <property type="evidence" value="ECO:0007669"/>
    <property type="project" value="UniProtKB-KW"/>
</dbReference>
<dbReference type="GO" id="GO:0004829">
    <property type="term" value="F:threonine-tRNA ligase activity"/>
    <property type="evidence" value="ECO:0007669"/>
    <property type="project" value="UniProtKB-UniRule"/>
</dbReference>
<dbReference type="GO" id="GO:0016740">
    <property type="term" value="F:transferase activity"/>
    <property type="evidence" value="ECO:0007669"/>
    <property type="project" value="UniProtKB-ARBA"/>
</dbReference>
<dbReference type="GO" id="GO:0000049">
    <property type="term" value="F:tRNA binding"/>
    <property type="evidence" value="ECO:0007669"/>
    <property type="project" value="UniProtKB-KW"/>
</dbReference>
<dbReference type="GO" id="GO:0006435">
    <property type="term" value="P:threonyl-tRNA aminoacylation"/>
    <property type="evidence" value="ECO:0007669"/>
    <property type="project" value="UniProtKB-UniRule"/>
</dbReference>
<dbReference type="CDD" id="cd01667">
    <property type="entry name" value="TGS_ThrRS"/>
    <property type="match status" value="1"/>
</dbReference>
<dbReference type="CDD" id="cd00860">
    <property type="entry name" value="ThrRS_anticodon"/>
    <property type="match status" value="1"/>
</dbReference>
<dbReference type="CDD" id="cd00771">
    <property type="entry name" value="ThrRS_core"/>
    <property type="match status" value="1"/>
</dbReference>
<dbReference type="FunFam" id="3.10.20.30:FF:000005">
    <property type="entry name" value="Threonine--tRNA ligase"/>
    <property type="match status" value="1"/>
</dbReference>
<dbReference type="FunFam" id="3.30.54.20:FF:000002">
    <property type="entry name" value="Threonine--tRNA ligase"/>
    <property type="match status" value="1"/>
</dbReference>
<dbReference type="FunFam" id="3.30.930.10:FF:000002">
    <property type="entry name" value="Threonine--tRNA ligase"/>
    <property type="match status" value="1"/>
</dbReference>
<dbReference type="FunFam" id="3.40.50.800:FF:000001">
    <property type="entry name" value="Threonine--tRNA ligase"/>
    <property type="match status" value="1"/>
</dbReference>
<dbReference type="FunFam" id="3.30.980.10:FF:000005">
    <property type="entry name" value="Threonyl-tRNA synthetase, mitochondrial"/>
    <property type="match status" value="1"/>
</dbReference>
<dbReference type="Gene3D" id="3.10.20.30">
    <property type="match status" value="1"/>
</dbReference>
<dbReference type="Gene3D" id="3.30.54.20">
    <property type="match status" value="1"/>
</dbReference>
<dbReference type="Gene3D" id="3.40.50.800">
    <property type="entry name" value="Anticodon-binding domain"/>
    <property type="match status" value="1"/>
</dbReference>
<dbReference type="Gene3D" id="3.30.930.10">
    <property type="entry name" value="Bira Bifunctional Protein, Domain 2"/>
    <property type="match status" value="1"/>
</dbReference>
<dbReference type="Gene3D" id="3.30.980.10">
    <property type="entry name" value="Threonyl-trna Synthetase, Chain A, domain 2"/>
    <property type="match status" value="1"/>
</dbReference>
<dbReference type="HAMAP" id="MF_00184">
    <property type="entry name" value="Thr_tRNA_synth"/>
    <property type="match status" value="1"/>
</dbReference>
<dbReference type="InterPro" id="IPR002314">
    <property type="entry name" value="aa-tRNA-synt_IIb"/>
</dbReference>
<dbReference type="InterPro" id="IPR006195">
    <property type="entry name" value="aa-tRNA-synth_II"/>
</dbReference>
<dbReference type="InterPro" id="IPR045864">
    <property type="entry name" value="aa-tRNA-synth_II/BPL/LPL"/>
</dbReference>
<dbReference type="InterPro" id="IPR004154">
    <property type="entry name" value="Anticodon-bd"/>
</dbReference>
<dbReference type="InterPro" id="IPR036621">
    <property type="entry name" value="Anticodon-bd_dom_sf"/>
</dbReference>
<dbReference type="InterPro" id="IPR012675">
    <property type="entry name" value="Beta-grasp_dom_sf"/>
</dbReference>
<dbReference type="InterPro" id="IPR004095">
    <property type="entry name" value="TGS"/>
</dbReference>
<dbReference type="InterPro" id="IPR012676">
    <property type="entry name" value="TGS-like"/>
</dbReference>
<dbReference type="InterPro" id="IPR002320">
    <property type="entry name" value="Thr-tRNA-ligase_IIa"/>
</dbReference>
<dbReference type="InterPro" id="IPR018163">
    <property type="entry name" value="Thr/Ala-tRNA-synth_IIc_edit"/>
</dbReference>
<dbReference type="InterPro" id="IPR047246">
    <property type="entry name" value="ThrRS_anticodon"/>
</dbReference>
<dbReference type="InterPro" id="IPR033728">
    <property type="entry name" value="ThrRS_core"/>
</dbReference>
<dbReference type="InterPro" id="IPR012947">
    <property type="entry name" value="tRNA_SAD"/>
</dbReference>
<dbReference type="NCBIfam" id="TIGR00418">
    <property type="entry name" value="thrS"/>
    <property type="match status" value="1"/>
</dbReference>
<dbReference type="PANTHER" id="PTHR11451:SF44">
    <property type="entry name" value="THREONINE--TRNA LIGASE, CHLOROPLASTIC_MITOCHONDRIAL 2"/>
    <property type="match status" value="1"/>
</dbReference>
<dbReference type="PANTHER" id="PTHR11451">
    <property type="entry name" value="THREONINE-TRNA LIGASE"/>
    <property type="match status" value="1"/>
</dbReference>
<dbReference type="Pfam" id="PF03129">
    <property type="entry name" value="HGTP_anticodon"/>
    <property type="match status" value="1"/>
</dbReference>
<dbReference type="Pfam" id="PF02824">
    <property type="entry name" value="TGS"/>
    <property type="match status" value="1"/>
</dbReference>
<dbReference type="Pfam" id="PF00587">
    <property type="entry name" value="tRNA-synt_2b"/>
    <property type="match status" value="1"/>
</dbReference>
<dbReference type="Pfam" id="PF07973">
    <property type="entry name" value="tRNA_SAD"/>
    <property type="match status" value="1"/>
</dbReference>
<dbReference type="PRINTS" id="PR01047">
    <property type="entry name" value="TRNASYNTHTHR"/>
</dbReference>
<dbReference type="SMART" id="SM00863">
    <property type="entry name" value="tRNA_SAD"/>
    <property type="match status" value="1"/>
</dbReference>
<dbReference type="SUPFAM" id="SSF52954">
    <property type="entry name" value="Class II aaRS ABD-related"/>
    <property type="match status" value="1"/>
</dbReference>
<dbReference type="SUPFAM" id="SSF55681">
    <property type="entry name" value="Class II aaRS and biotin synthetases"/>
    <property type="match status" value="1"/>
</dbReference>
<dbReference type="SUPFAM" id="SSF81271">
    <property type="entry name" value="TGS-like"/>
    <property type="match status" value="1"/>
</dbReference>
<dbReference type="SUPFAM" id="SSF55186">
    <property type="entry name" value="ThrRS/AlaRS common domain"/>
    <property type="match status" value="1"/>
</dbReference>
<dbReference type="PROSITE" id="PS50862">
    <property type="entry name" value="AA_TRNA_LIGASE_II"/>
    <property type="match status" value="1"/>
</dbReference>
<dbReference type="PROSITE" id="PS51880">
    <property type="entry name" value="TGS"/>
    <property type="match status" value="1"/>
</dbReference>
<sequence length="644" mass="75014">MYSLGNQVKAMVITLRDGTKREFEKGITVYEIAKSISDKLAREAVGGKFNGKIVELNTKIEEDGELEILTFEDEEGKKIYWHTSSHILAQAVKRLFKDVKLAIGPAIDNGFYYDFDTERPFTTEDFEAIEEEMNKIIKEDYKLERFVLSKEEAIKFMKEKDEPYKVELIEEIPEGEEISFYKQGEFVDLCAGPHLPSTGMVKAIKLLSVAGAYWKGDEKNKMLQRIYGISFPKKSMLDEYLHMMEEAKKRDHRKLGKELDLFSIHPEGPGFPFFHPKGMIIRNILEDFWRKEHIKRGYQEIRTPIILNEELWKRSGHWDHYKENMYFTEIDGQTYAIKPMNCPGAMLVYKSTLRSYRDLPLRLCELGLVHRHELSGVLHGLMRVRSFTQDDAHLFMTPEQVEDEILGVINLVDYFYKIFGFEYHVELSTRPENSMGTDEEWELATNALISALKRANLPYKVNEGEGAFYGPKIDFHLKDSIGRTWQCGTIQLDFQMPERFELEYIGPDGEKHRPIMLHRVIYGSIERFIGILTEHFAGAFPTWLAPVQVRVLPISEKHHEYARKVYERLQEHDIRVELDDRNEKIGYKIREAQLQKIPYMLIVGDREVEEGNVSLRSRKDGDLGPISLDNFIEKILKEIATKAL</sequence>
<keyword id="KW-0030">Aminoacyl-tRNA synthetase</keyword>
<keyword id="KW-0067">ATP-binding</keyword>
<keyword id="KW-0963">Cytoplasm</keyword>
<keyword id="KW-0436">Ligase</keyword>
<keyword id="KW-0479">Metal-binding</keyword>
<keyword id="KW-0547">Nucleotide-binding</keyword>
<keyword id="KW-0648">Protein biosynthesis</keyword>
<keyword id="KW-1185">Reference proteome</keyword>
<keyword id="KW-0694">RNA-binding</keyword>
<keyword id="KW-0820">tRNA-binding</keyword>
<keyword id="KW-0862">Zinc</keyword>
<gene>
    <name evidence="1" type="primary">thrS</name>
    <name type="ordered locus">TTE1713</name>
</gene>
<evidence type="ECO:0000255" key="1">
    <source>
        <dbReference type="HAMAP-Rule" id="MF_00184"/>
    </source>
</evidence>
<evidence type="ECO:0000255" key="2">
    <source>
        <dbReference type="PROSITE-ProRule" id="PRU01228"/>
    </source>
</evidence>
<name>SYT_CALS4</name>
<feature type="chain" id="PRO_0000101076" description="Threonine--tRNA ligase">
    <location>
        <begin position="1"/>
        <end position="644"/>
    </location>
</feature>
<feature type="domain" description="TGS" evidence="2">
    <location>
        <begin position="8"/>
        <end position="70"/>
    </location>
</feature>
<feature type="region of interest" description="Catalytic" evidence="1">
    <location>
        <begin position="251"/>
        <end position="541"/>
    </location>
</feature>
<feature type="binding site" evidence="1">
    <location>
        <position position="342"/>
    </location>
    <ligand>
        <name>Zn(2+)</name>
        <dbReference type="ChEBI" id="CHEBI:29105"/>
    </ligand>
</feature>
<feature type="binding site" evidence="1">
    <location>
        <position position="393"/>
    </location>
    <ligand>
        <name>Zn(2+)</name>
        <dbReference type="ChEBI" id="CHEBI:29105"/>
    </ligand>
</feature>
<feature type="binding site" evidence="1">
    <location>
        <position position="518"/>
    </location>
    <ligand>
        <name>Zn(2+)</name>
        <dbReference type="ChEBI" id="CHEBI:29105"/>
    </ligand>
</feature>
<comment type="function">
    <text evidence="1">Catalyzes the attachment of threonine to tRNA(Thr) in a two-step reaction: L-threonine is first activated by ATP to form Thr-AMP and then transferred to the acceptor end of tRNA(Thr). Also edits incorrectly charged L-seryl-tRNA(Thr).</text>
</comment>
<comment type="catalytic activity">
    <reaction evidence="1">
        <text>tRNA(Thr) + L-threonine + ATP = L-threonyl-tRNA(Thr) + AMP + diphosphate + H(+)</text>
        <dbReference type="Rhea" id="RHEA:24624"/>
        <dbReference type="Rhea" id="RHEA-COMP:9670"/>
        <dbReference type="Rhea" id="RHEA-COMP:9704"/>
        <dbReference type="ChEBI" id="CHEBI:15378"/>
        <dbReference type="ChEBI" id="CHEBI:30616"/>
        <dbReference type="ChEBI" id="CHEBI:33019"/>
        <dbReference type="ChEBI" id="CHEBI:57926"/>
        <dbReference type="ChEBI" id="CHEBI:78442"/>
        <dbReference type="ChEBI" id="CHEBI:78534"/>
        <dbReference type="ChEBI" id="CHEBI:456215"/>
        <dbReference type="EC" id="6.1.1.3"/>
    </reaction>
</comment>
<comment type="cofactor">
    <cofactor evidence="1">
        <name>Zn(2+)</name>
        <dbReference type="ChEBI" id="CHEBI:29105"/>
    </cofactor>
    <text evidence="1">Binds 1 zinc ion per subunit.</text>
</comment>
<comment type="subunit">
    <text evidence="1">Homodimer.</text>
</comment>
<comment type="subcellular location">
    <subcellularLocation>
        <location evidence="1">Cytoplasm</location>
    </subcellularLocation>
</comment>
<comment type="similarity">
    <text evidence="1">Belongs to the class-II aminoacyl-tRNA synthetase family.</text>
</comment>
<accession>Q8R9A4</accession>